<reference key="1">
    <citation type="journal article" date="2007" name="BMC Microbiol.">
        <title>Subtle genetic changes enhance virulence of methicillin resistant and sensitive Staphylococcus aureus.</title>
        <authorList>
            <person name="Highlander S.K."/>
            <person name="Hulten K.G."/>
            <person name="Qin X."/>
            <person name="Jiang H."/>
            <person name="Yerrapragada S."/>
            <person name="Mason E.O. Jr."/>
            <person name="Shang Y."/>
            <person name="Williams T.M."/>
            <person name="Fortunov R.M."/>
            <person name="Liu Y."/>
            <person name="Igboeli O."/>
            <person name="Petrosino J."/>
            <person name="Tirumalai M."/>
            <person name="Uzman A."/>
            <person name="Fox G.E."/>
            <person name="Cardenas A.M."/>
            <person name="Muzny D.M."/>
            <person name="Hemphill L."/>
            <person name="Ding Y."/>
            <person name="Dugan S."/>
            <person name="Blyth P.R."/>
            <person name="Buhay C.J."/>
            <person name="Dinh H.H."/>
            <person name="Hawes A.C."/>
            <person name="Holder M."/>
            <person name="Kovar C.L."/>
            <person name="Lee S.L."/>
            <person name="Liu W."/>
            <person name="Nazareth L.V."/>
            <person name="Wang Q."/>
            <person name="Zhou J."/>
            <person name="Kaplan S.L."/>
            <person name="Weinstock G.M."/>
        </authorList>
    </citation>
    <scope>NUCLEOTIDE SEQUENCE [LARGE SCALE GENOMIC DNA]</scope>
    <source>
        <strain>USA300 / TCH1516</strain>
    </source>
</reference>
<protein>
    <recommendedName>
        <fullName evidence="1">Glutamyl-tRNA(Gln) amidotransferase subunit A</fullName>
        <shortName evidence="1">Glu-ADT subunit A</shortName>
        <ecNumber evidence="1">6.3.5.7</ecNumber>
    </recommendedName>
</protein>
<dbReference type="EC" id="6.3.5.7" evidence="1"/>
<dbReference type="EMBL" id="CP000730">
    <property type="protein sequence ID" value="ABX29903.1"/>
    <property type="molecule type" value="Genomic_DNA"/>
</dbReference>
<dbReference type="RefSeq" id="WP_000027928.1">
    <property type="nucleotide sequence ID" value="NC_010079.1"/>
</dbReference>
<dbReference type="SMR" id="A8Z2R4"/>
<dbReference type="KEGG" id="sax:USA300HOU_1901"/>
<dbReference type="HOGENOM" id="CLU_009600_0_3_9"/>
<dbReference type="GO" id="GO:0030956">
    <property type="term" value="C:glutamyl-tRNA(Gln) amidotransferase complex"/>
    <property type="evidence" value="ECO:0007669"/>
    <property type="project" value="InterPro"/>
</dbReference>
<dbReference type="GO" id="GO:0005524">
    <property type="term" value="F:ATP binding"/>
    <property type="evidence" value="ECO:0007669"/>
    <property type="project" value="UniProtKB-KW"/>
</dbReference>
<dbReference type="GO" id="GO:0050567">
    <property type="term" value="F:glutaminyl-tRNA synthase (glutamine-hydrolyzing) activity"/>
    <property type="evidence" value="ECO:0007669"/>
    <property type="project" value="UniProtKB-UniRule"/>
</dbReference>
<dbReference type="GO" id="GO:0006412">
    <property type="term" value="P:translation"/>
    <property type="evidence" value="ECO:0007669"/>
    <property type="project" value="UniProtKB-UniRule"/>
</dbReference>
<dbReference type="Gene3D" id="3.90.1300.10">
    <property type="entry name" value="Amidase signature (AS) domain"/>
    <property type="match status" value="1"/>
</dbReference>
<dbReference type="HAMAP" id="MF_00120">
    <property type="entry name" value="GatA"/>
    <property type="match status" value="1"/>
</dbReference>
<dbReference type="InterPro" id="IPR000120">
    <property type="entry name" value="Amidase"/>
</dbReference>
<dbReference type="InterPro" id="IPR020556">
    <property type="entry name" value="Amidase_CS"/>
</dbReference>
<dbReference type="InterPro" id="IPR023631">
    <property type="entry name" value="Amidase_dom"/>
</dbReference>
<dbReference type="InterPro" id="IPR036928">
    <property type="entry name" value="AS_sf"/>
</dbReference>
<dbReference type="InterPro" id="IPR004412">
    <property type="entry name" value="GatA"/>
</dbReference>
<dbReference type="NCBIfam" id="TIGR00132">
    <property type="entry name" value="gatA"/>
    <property type="match status" value="1"/>
</dbReference>
<dbReference type="PANTHER" id="PTHR11895:SF151">
    <property type="entry name" value="GLUTAMYL-TRNA(GLN) AMIDOTRANSFERASE SUBUNIT A"/>
    <property type="match status" value="1"/>
</dbReference>
<dbReference type="PANTHER" id="PTHR11895">
    <property type="entry name" value="TRANSAMIDASE"/>
    <property type="match status" value="1"/>
</dbReference>
<dbReference type="Pfam" id="PF01425">
    <property type="entry name" value="Amidase"/>
    <property type="match status" value="1"/>
</dbReference>
<dbReference type="SUPFAM" id="SSF75304">
    <property type="entry name" value="Amidase signature (AS) enzymes"/>
    <property type="match status" value="1"/>
</dbReference>
<dbReference type="PROSITE" id="PS00571">
    <property type="entry name" value="AMIDASES"/>
    <property type="match status" value="1"/>
</dbReference>
<keyword id="KW-0067">ATP-binding</keyword>
<keyword id="KW-0436">Ligase</keyword>
<keyword id="KW-0547">Nucleotide-binding</keyword>
<keyword id="KW-0648">Protein biosynthesis</keyword>
<proteinExistence type="inferred from homology"/>
<feature type="chain" id="PRO_1000076145" description="Glutamyl-tRNA(Gln) amidotransferase subunit A">
    <location>
        <begin position="1"/>
        <end position="485"/>
    </location>
</feature>
<feature type="active site" description="Charge relay system" evidence="1">
    <location>
        <position position="79"/>
    </location>
</feature>
<feature type="active site" description="Charge relay system" evidence="1">
    <location>
        <position position="154"/>
    </location>
</feature>
<feature type="active site" description="Acyl-ester intermediate" evidence="1">
    <location>
        <position position="178"/>
    </location>
</feature>
<organism>
    <name type="scientific">Staphylococcus aureus (strain USA300 / TCH1516)</name>
    <dbReference type="NCBI Taxonomy" id="451516"/>
    <lineage>
        <taxon>Bacteria</taxon>
        <taxon>Bacillati</taxon>
        <taxon>Bacillota</taxon>
        <taxon>Bacilli</taxon>
        <taxon>Bacillales</taxon>
        <taxon>Staphylococcaceae</taxon>
        <taxon>Staphylococcus</taxon>
    </lineage>
</organism>
<gene>
    <name evidence="1" type="primary">gatA</name>
    <name type="ordered locus">USA300HOU_1901</name>
</gene>
<comment type="function">
    <text evidence="1">Allows the formation of correctly charged Gln-tRNA(Gln) through the transamidation of misacylated Glu-tRNA(Gln) in organisms which lack glutaminyl-tRNA synthetase. The reaction takes place in the presence of glutamine and ATP through an activated gamma-phospho-Glu-tRNA(Gln).</text>
</comment>
<comment type="catalytic activity">
    <reaction evidence="1">
        <text>L-glutamyl-tRNA(Gln) + L-glutamine + ATP + H2O = L-glutaminyl-tRNA(Gln) + L-glutamate + ADP + phosphate + H(+)</text>
        <dbReference type="Rhea" id="RHEA:17521"/>
        <dbReference type="Rhea" id="RHEA-COMP:9681"/>
        <dbReference type="Rhea" id="RHEA-COMP:9684"/>
        <dbReference type="ChEBI" id="CHEBI:15377"/>
        <dbReference type="ChEBI" id="CHEBI:15378"/>
        <dbReference type="ChEBI" id="CHEBI:29985"/>
        <dbReference type="ChEBI" id="CHEBI:30616"/>
        <dbReference type="ChEBI" id="CHEBI:43474"/>
        <dbReference type="ChEBI" id="CHEBI:58359"/>
        <dbReference type="ChEBI" id="CHEBI:78520"/>
        <dbReference type="ChEBI" id="CHEBI:78521"/>
        <dbReference type="ChEBI" id="CHEBI:456216"/>
        <dbReference type="EC" id="6.3.5.7"/>
    </reaction>
</comment>
<comment type="subunit">
    <text evidence="1">Heterotrimer of A, B and C subunits.</text>
</comment>
<comment type="similarity">
    <text evidence="1">Belongs to the amidase family. GatA subfamily.</text>
</comment>
<sequence length="485" mass="52821">MSIRYESVENLLTLIKDKKIKPSDVVKDIYDAIEETDPTIKSFLALDKENAIKKAQELDELQAKDQMDGKLFGIPMGIKDNIITNGLETTCASKMLEGFVPIYESTVMEKLHNENAVLIGKLNMDEFAMGGSTETSYFKKTVNPFDHKAVPGGSSGGSAAAVAAGLVPFSLGSDTGGSIRQPAAYCGVVGMKPTYGRVSRFGLVAFASSLDQIGPLTRNVKDNAIVLEAISGADVNDSTSAPVDDVDFTSEIGKDIKGLKVALPKEYLGEGVADDVKEAVQNAVETLKSLGAVVEEVSLPNTKFGIPSYYVIASSEASSNLSRFDGIRYGYHSKEAHSLEELYKMSRSEGFGKEVKRRIFLGTFALSSGYYDAYYKKSQKVRTLIKNDFDKVFENYDVVVGPTAPTTAFNLGEEIDDPLTMYANDLLTTPVNLAGLPGISVPCGQSNGRPIGLQFIGKPFDEKTLYRVAYQYETQYNLHDVYEKL</sequence>
<evidence type="ECO:0000255" key="1">
    <source>
        <dbReference type="HAMAP-Rule" id="MF_00120"/>
    </source>
</evidence>
<accession>A8Z2R4</accession>
<name>GATA_STAAT</name>